<comment type="catalytic activity">
    <reaction evidence="1">
        <text>L-aspartate + NH4(+) + ATP = L-asparagine + AMP + diphosphate + H(+)</text>
        <dbReference type="Rhea" id="RHEA:11372"/>
        <dbReference type="ChEBI" id="CHEBI:15378"/>
        <dbReference type="ChEBI" id="CHEBI:28938"/>
        <dbReference type="ChEBI" id="CHEBI:29991"/>
        <dbReference type="ChEBI" id="CHEBI:30616"/>
        <dbReference type="ChEBI" id="CHEBI:33019"/>
        <dbReference type="ChEBI" id="CHEBI:58048"/>
        <dbReference type="ChEBI" id="CHEBI:456215"/>
        <dbReference type="EC" id="6.3.1.1"/>
    </reaction>
</comment>
<comment type="pathway">
    <text evidence="1">Amino-acid biosynthesis; L-asparagine biosynthesis; L-asparagine from L-aspartate (ammonia route): step 1/1.</text>
</comment>
<comment type="subcellular location">
    <subcellularLocation>
        <location evidence="1">Cytoplasm</location>
    </subcellularLocation>
</comment>
<comment type="similarity">
    <text evidence="1">Belongs to the class-II aminoacyl-tRNA synthetase family. AsnA subfamily.</text>
</comment>
<reference key="1">
    <citation type="journal article" date="2010" name="BMC Genomics">
        <title>A genomic perspective on the potential of Actinobacillus succinogenes for industrial succinate production.</title>
        <authorList>
            <person name="McKinlay J.B."/>
            <person name="Laivenieks M."/>
            <person name="Schindler B.D."/>
            <person name="McKinlay A.A."/>
            <person name="Siddaramappa S."/>
            <person name="Challacombe J.F."/>
            <person name="Lowry S.R."/>
            <person name="Clum A."/>
            <person name="Lapidus A.L."/>
            <person name="Burkhart K.B."/>
            <person name="Harkins V."/>
            <person name="Vieille C."/>
        </authorList>
    </citation>
    <scope>NUCLEOTIDE SEQUENCE [LARGE SCALE GENOMIC DNA]</scope>
    <source>
        <strain>ATCC 55618 / DSM 22257 / CCUG 43843 / 130Z</strain>
    </source>
</reference>
<accession>A6VLN1</accession>
<name>ASNA_ACTSZ</name>
<keyword id="KW-0028">Amino-acid biosynthesis</keyword>
<keyword id="KW-0061">Asparagine biosynthesis</keyword>
<keyword id="KW-0067">ATP-binding</keyword>
<keyword id="KW-0963">Cytoplasm</keyword>
<keyword id="KW-0436">Ligase</keyword>
<keyword id="KW-0547">Nucleotide-binding</keyword>
<keyword id="KW-1185">Reference proteome</keyword>
<gene>
    <name evidence="1" type="primary">asnA</name>
    <name type="ordered locus">Asuc_0503</name>
</gene>
<protein>
    <recommendedName>
        <fullName evidence="1">Aspartate--ammonia ligase</fullName>
        <ecNumber evidence="1">6.3.1.1</ecNumber>
    </recommendedName>
    <alternativeName>
        <fullName evidence="1">Asparagine synthetase A</fullName>
    </alternativeName>
</protein>
<sequence>MKKSFILQQQEISFAKNTFTTKLAEHLGLVEVQGPILSQVGNGIQDNLSGKEKPVQVNVKMIEDATFEVVHSLAKWKRHTLARFGFAEGEGLFVHMKALRPDEDSLDQTHSVYVDQWDWEKVIPAGRRNLNYLKETVRSIYAAIVETQEAVEQKFGLKAFLPKEITFIHSEDLARDYPHMTDKERENEICKKYGAVFLIGIGGDLPDGKPHDMRAPDYDDWTTSSEGEYKGLNGDILVWNPVLNRAFELSSMGIRVDETALRRQLALTHDEERLNFAWHQDLINGRMPLSIGGGIGQSRLAMLLLQKHHIGEVQSSVWPKTVMEQFENIL</sequence>
<proteinExistence type="inferred from homology"/>
<organism>
    <name type="scientific">Actinobacillus succinogenes (strain ATCC 55618 / DSM 22257 / CCUG 43843 / 130Z)</name>
    <dbReference type="NCBI Taxonomy" id="339671"/>
    <lineage>
        <taxon>Bacteria</taxon>
        <taxon>Pseudomonadati</taxon>
        <taxon>Pseudomonadota</taxon>
        <taxon>Gammaproteobacteria</taxon>
        <taxon>Pasteurellales</taxon>
        <taxon>Pasteurellaceae</taxon>
        <taxon>Actinobacillus</taxon>
    </lineage>
</organism>
<dbReference type="EC" id="6.3.1.1" evidence="1"/>
<dbReference type="EMBL" id="CP000746">
    <property type="protein sequence ID" value="ABR73878.1"/>
    <property type="molecule type" value="Genomic_DNA"/>
</dbReference>
<dbReference type="RefSeq" id="WP_012072258.1">
    <property type="nucleotide sequence ID" value="NC_009655.1"/>
</dbReference>
<dbReference type="SMR" id="A6VLN1"/>
<dbReference type="STRING" id="339671.Asuc_0503"/>
<dbReference type="KEGG" id="asu:Asuc_0503"/>
<dbReference type="eggNOG" id="COG2502">
    <property type="taxonomic scope" value="Bacteria"/>
</dbReference>
<dbReference type="HOGENOM" id="CLU_071543_0_0_6"/>
<dbReference type="OrthoDB" id="3185462at2"/>
<dbReference type="UniPathway" id="UPA00134">
    <property type="reaction ID" value="UER00194"/>
</dbReference>
<dbReference type="Proteomes" id="UP000001114">
    <property type="component" value="Chromosome"/>
</dbReference>
<dbReference type="GO" id="GO:0005829">
    <property type="term" value="C:cytosol"/>
    <property type="evidence" value="ECO:0007669"/>
    <property type="project" value="TreeGrafter"/>
</dbReference>
<dbReference type="GO" id="GO:0004071">
    <property type="term" value="F:aspartate-ammonia ligase activity"/>
    <property type="evidence" value="ECO:0007669"/>
    <property type="project" value="UniProtKB-UniRule"/>
</dbReference>
<dbReference type="GO" id="GO:0005524">
    <property type="term" value="F:ATP binding"/>
    <property type="evidence" value="ECO:0007669"/>
    <property type="project" value="UniProtKB-UniRule"/>
</dbReference>
<dbReference type="GO" id="GO:0070981">
    <property type="term" value="P:L-asparagine biosynthetic process"/>
    <property type="evidence" value="ECO:0007669"/>
    <property type="project" value="UniProtKB-UniRule"/>
</dbReference>
<dbReference type="Gene3D" id="3.30.930.10">
    <property type="entry name" value="Bira Bifunctional Protein, Domain 2"/>
    <property type="match status" value="1"/>
</dbReference>
<dbReference type="HAMAP" id="MF_00555">
    <property type="entry name" value="AsnA"/>
    <property type="match status" value="1"/>
</dbReference>
<dbReference type="InterPro" id="IPR006195">
    <property type="entry name" value="aa-tRNA-synth_II"/>
</dbReference>
<dbReference type="InterPro" id="IPR045864">
    <property type="entry name" value="aa-tRNA-synth_II/BPL/LPL"/>
</dbReference>
<dbReference type="InterPro" id="IPR004618">
    <property type="entry name" value="AsnA"/>
</dbReference>
<dbReference type="NCBIfam" id="TIGR00669">
    <property type="entry name" value="asnA"/>
    <property type="match status" value="1"/>
</dbReference>
<dbReference type="PANTHER" id="PTHR30073">
    <property type="entry name" value="ASPARTATE--AMMONIA LIGASE"/>
    <property type="match status" value="1"/>
</dbReference>
<dbReference type="PANTHER" id="PTHR30073:SF5">
    <property type="entry name" value="ASPARTATE--AMMONIA LIGASE"/>
    <property type="match status" value="1"/>
</dbReference>
<dbReference type="Pfam" id="PF03590">
    <property type="entry name" value="AsnA"/>
    <property type="match status" value="1"/>
</dbReference>
<dbReference type="PIRSF" id="PIRSF001555">
    <property type="entry name" value="Asp_ammon_ligase"/>
    <property type="match status" value="1"/>
</dbReference>
<dbReference type="SUPFAM" id="SSF55681">
    <property type="entry name" value="Class II aaRS and biotin synthetases"/>
    <property type="match status" value="1"/>
</dbReference>
<dbReference type="PROSITE" id="PS50862">
    <property type="entry name" value="AA_TRNA_LIGASE_II"/>
    <property type="match status" value="1"/>
</dbReference>
<evidence type="ECO:0000255" key="1">
    <source>
        <dbReference type="HAMAP-Rule" id="MF_00555"/>
    </source>
</evidence>
<feature type="chain" id="PRO_1000072559" description="Aspartate--ammonia ligase">
    <location>
        <begin position="1"/>
        <end position="330"/>
    </location>
</feature>